<accession>B5R415</accession>
<proteinExistence type="inferred from homology"/>
<sequence>MKTSLFKSLYFQVLTAIAIGILLGHYYPELGAQMKPLGDAFVKLIKMIIAPVIFCTVVTGIAGMESMKAVGRTGAVALLYFEIVSTIALIIGLIIVNVVQPGAGMNVDPATLDAQAVAVYAAQAKEQGIIAFLMDVIPGSVIGAFASGNILQVLLFAVLFGFALHRLGSKGQLIFNVIESFSQVIFGIINMIMRLAPIGAFGAMAFTIGKYGVGSLVQLGQLIICFYITCILFVVVVLGTIARVTGFSIFKFIRYIREELLIVLGTSSSESALPRMLDKMEKLGCRKSVVGLVIPTGYSFNLDGTSIYLTMAAVFIAQATNSHMDIFHQITLLVVLLLSSKGAAGVTGSGFIVLAATISAVGHLPVAGLALILGIDRFMSEARALTNLVGNGVATVVVAKWVKELDHQKLDDVLNNRAPDGKTHEISS</sequence>
<protein>
    <recommendedName>
        <fullName evidence="1">C4-dicarboxylate transport protein</fullName>
    </recommendedName>
</protein>
<evidence type="ECO:0000255" key="1">
    <source>
        <dbReference type="HAMAP-Rule" id="MF_01300"/>
    </source>
</evidence>
<comment type="function">
    <text evidence="1">Responsible for the transport of dicarboxylates such as succinate, fumarate, and malate from the periplasm across the membrane.</text>
</comment>
<comment type="subcellular location">
    <subcellularLocation>
        <location evidence="1">Cell inner membrane</location>
        <topology evidence="1">Multi-pass membrane protein</topology>
    </subcellularLocation>
</comment>
<comment type="similarity">
    <text evidence="1">Belongs to the dicarboxylate/amino acid:cation symporter (DAACS) (TC 2.A.23) family.</text>
</comment>
<dbReference type="EMBL" id="AM933172">
    <property type="protein sequence ID" value="CAR35013.1"/>
    <property type="molecule type" value="Genomic_DNA"/>
</dbReference>
<dbReference type="RefSeq" id="WP_000858228.1">
    <property type="nucleotide sequence ID" value="NC_011294.1"/>
</dbReference>
<dbReference type="SMR" id="B5R415"/>
<dbReference type="KEGG" id="set:SEN3437"/>
<dbReference type="HOGENOM" id="CLU_019375_7_0_6"/>
<dbReference type="Proteomes" id="UP000000613">
    <property type="component" value="Chromosome"/>
</dbReference>
<dbReference type="GO" id="GO:0005886">
    <property type="term" value="C:plasma membrane"/>
    <property type="evidence" value="ECO:0007669"/>
    <property type="project" value="UniProtKB-SubCell"/>
</dbReference>
<dbReference type="GO" id="GO:0015138">
    <property type="term" value="F:fumarate transmembrane transporter activity"/>
    <property type="evidence" value="ECO:0007669"/>
    <property type="project" value="TreeGrafter"/>
</dbReference>
<dbReference type="GO" id="GO:0015366">
    <property type="term" value="F:malate:proton symporter activity"/>
    <property type="evidence" value="ECO:0007669"/>
    <property type="project" value="TreeGrafter"/>
</dbReference>
<dbReference type="GO" id="GO:0015141">
    <property type="term" value="F:succinate transmembrane transporter activity"/>
    <property type="evidence" value="ECO:0007669"/>
    <property type="project" value="TreeGrafter"/>
</dbReference>
<dbReference type="GO" id="GO:0070778">
    <property type="term" value="P:L-aspartate transmembrane transport"/>
    <property type="evidence" value="ECO:0007669"/>
    <property type="project" value="TreeGrafter"/>
</dbReference>
<dbReference type="FunFam" id="1.10.3860.10:FF:000001">
    <property type="entry name" value="C4-dicarboxylate transport protein"/>
    <property type="match status" value="1"/>
</dbReference>
<dbReference type="Gene3D" id="1.10.3860.10">
    <property type="entry name" value="Sodium:dicarboxylate symporter"/>
    <property type="match status" value="1"/>
</dbReference>
<dbReference type="HAMAP" id="MF_01300">
    <property type="entry name" value="C4_dicarb_transport"/>
    <property type="match status" value="1"/>
</dbReference>
<dbReference type="InterPro" id="IPR023954">
    <property type="entry name" value="C4_dicarb_transport"/>
</dbReference>
<dbReference type="InterPro" id="IPR001991">
    <property type="entry name" value="Na-dicarboxylate_symporter"/>
</dbReference>
<dbReference type="InterPro" id="IPR018107">
    <property type="entry name" value="Na-dicarboxylate_symporter_CS"/>
</dbReference>
<dbReference type="InterPro" id="IPR036458">
    <property type="entry name" value="Na:dicarbo_symporter_sf"/>
</dbReference>
<dbReference type="NCBIfam" id="NF002461">
    <property type="entry name" value="PRK01663.1"/>
    <property type="match status" value="1"/>
</dbReference>
<dbReference type="NCBIfam" id="NF009587">
    <property type="entry name" value="PRK13027.1"/>
    <property type="match status" value="1"/>
</dbReference>
<dbReference type="PANTHER" id="PTHR42865:SF1">
    <property type="entry name" value="AEROBIC C4-DICARBOXYLATE TRANSPORT PROTEIN"/>
    <property type="match status" value="1"/>
</dbReference>
<dbReference type="PANTHER" id="PTHR42865">
    <property type="entry name" value="PROTON/GLUTAMATE-ASPARTATE SYMPORTER"/>
    <property type="match status" value="1"/>
</dbReference>
<dbReference type="Pfam" id="PF00375">
    <property type="entry name" value="SDF"/>
    <property type="match status" value="1"/>
</dbReference>
<dbReference type="PRINTS" id="PR00173">
    <property type="entry name" value="EDTRNSPORT"/>
</dbReference>
<dbReference type="SUPFAM" id="SSF118215">
    <property type="entry name" value="Proton glutamate symport protein"/>
    <property type="match status" value="1"/>
</dbReference>
<dbReference type="PROSITE" id="PS00713">
    <property type="entry name" value="NA_DICARBOXYL_SYMP_1"/>
    <property type="match status" value="1"/>
</dbReference>
<dbReference type="PROSITE" id="PS00714">
    <property type="entry name" value="NA_DICARBOXYL_SYMP_2"/>
    <property type="match status" value="1"/>
</dbReference>
<feature type="chain" id="PRO_1000140465" description="C4-dicarboxylate transport protein">
    <location>
        <begin position="1"/>
        <end position="428"/>
    </location>
</feature>
<feature type="transmembrane region" description="Helical" evidence="1">
    <location>
        <begin position="4"/>
        <end position="24"/>
    </location>
</feature>
<feature type="transmembrane region" description="Helical" evidence="1">
    <location>
        <begin position="44"/>
        <end position="64"/>
    </location>
</feature>
<feature type="transmembrane region" description="Helical" evidence="1">
    <location>
        <begin position="76"/>
        <end position="96"/>
    </location>
</feature>
<feature type="transmembrane region" description="Helical" evidence="1">
    <location>
        <begin position="142"/>
        <end position="162"/>
    </location>
</feature>
<feature type="transmembrane region" description="Helical" evidence="1">
    <location>
        <begin position="184"/>
        <end position="204"/>
    </location>
</feature>
<feature type="transmembrane region" description="Helical" evidence="1">
    <location>
        <begin position="222"/>
        <end position="242"/>
    </location>
</feature>
<feature type="transmembrane region" description="Helical" evidence="1">
    <location>
        <begin position="289"/>
        <end position="309"/>
    </location>
</feature>
<feature type="transmembrane region" description="Helical" evidence="1">
    <location>
        <begin position="326"/>
        <end position="346"/>
    </location>
</feature>
<feature type="transmembrane region" description="Helical" evidence="1">
    <location>
        <begin position="352"/>
        <end position="372"/>
    </location>
</feature>
<keyword id="KW-0997">Cell inner membrane</keyword>
<keyword id="KW-1003">Cell membrane</keyword>
<keyword id="KW-0472">Membrane</keyword>
<keyword id="KW-0769">Symport</keyword>
<keyword id="KW-0812">Transmembrane</keyword>
<keyword id="KW-1133">Transmembrane helix</keyword>
<keyword id="KW-0813">Transport</keyword>
<reference key="1">
    <citation type="journal article" date="2008" name="Genome Res.">
        <title>Comparative genome analysis of Salmonella enteritidis PT4 and Salmonella gallinarum 287/91 provides insights into evolutionary and host adaptation pathways.</title>
        <authorList>
            <person name="Thomson N.R."/>
            <person name="Clayton D.J."/>
            <person name="Windhorst D."/>
            <person name="Vernikos G."/>
            <person name="Davidson S."/>
            <person name="Churcher C."/>
            <person name="Quail M.A."/>
            <person name="Stevens M."/>
            <person name="Jones M.A."/>
            <person name="Watson M."/>
            <person name="Barron A."/>
            <person name="Layton A."/>
            <person name="Pickard D."/>
            <person name="Kingsley R.A."/>
            <person name="Bignell A."/>
            <person name="Clark L."/>
            <person name="Harris B."/>
            <person name="Ormond D."/>
            <person name="Abdellah Z."/>
            <person name="Brooks K."/>
            <person name="Cherevach I."/>
            <person name="Chillingworth T."/>
            <person name="Woodward J."/>
            <person name="Norberczak H."/>
            <person name="Lord A."/>
            <person name="Arrowsmith C."/>
            <person name="Jagels K."/>
            <person name="Moule S."/>
            <person name="Mungall K."/>
            <person name="Saunders M."/>
            <person name="Whitehead S."/>
            <person name="Chabalgoity J.A."/>
            <person name="Maskell D."/>
            <person name="Humphreys T."/>
            <person name="Roberts M."/>
            <person name="Barrow P.A."/>
            <person name="Dougan G."/>
            <person name="Parkhill J."/>
        </authorList>
    </citation>
    <scope>NUCLEOTIDE SEQUENCE [LARGE SCALE GENOMIC DNA]</scope>
    <source>
        <strain>P125109</strain>
    </source>
</reference>
<gene>
    <name evidence="1" type="primary">dctA</name>
    <name type="ordered locus">SEN3437</name>
</gene>
<name>DCTA_SALEP</name>
<organism>
    <name type="scientific">Salmonella enteritidis PT4 (strain P125109)</name>
    <dbReference type="NCBI Taxonomy" id="550537"/>
    <lineage>
        <taxon>Bacteria</taxon>
        <taxon>Pseudomonadati</taxon>
        <taxon>Pseudomonadota</taxon>
        <taxon>Gammaproteobacteria</taxon>
        <taxon>Enterobacterales</taxon>
        <taxon>Enterobacteriaceae</taxon>
        <taxon>Salmonella</taxon>
    </lineage>
</organism>